<dbReference type="EC" id="5.4.4.2" evidence="1"/>
<dbReference type="EMBL" id="AE005174">
    <property type="protein sequence ID" value="AAG54928.1"/>
    <property type="molecule type" value="Genomic_DNA"/>
</dbReference>
<dbReference type="EMBL" id="BA000007">
    <property type="protein sequence ID" value="BAB34055.1"/>
    <property type="molecule type" value="Genomic_DNA"/>
</dbReference>
<dbReference type="PIR" id="D85558">
    <property type="entry name" value="D85558"/>
</dbReference>
<dbReference type="PIR" id="H90707">
    <property type="entry name" value="H90707"/>
</dbReference>
<dbReference type="RefSeq" id="NP_308659.1">
    <property type="nucleotide sequence ID" value="NC_002695.1"/>
</dbReference>
<dbReference type="RefSeq" id="WP_000381303.1">
    <property type="nucleotide sequence ID" value="NZ_VOAI01000012.1"/>
</dbReference>
<dbReference type="SMR" id="P0AEJ3"/>
<dbReference type="STRING" id="155864.Z0735"/>
<dbReference type="GeneID" id="916991"/>
<dbReference type="KEGG" id="ece:Z0735"/>
<dbReference type="KEGG" id="ecs:ECs_0632"/>
<dbReference type="PATRIC" id="fig|386585.9.peg.742"/>
<dbReference type="eggNOG" id="COG1169">
    <property type="taxonomic scope" value="Bacteria"/>
</dbReference>
<dbReference type="HOGENOM" id="CLU_006493_8_6_6"/>
<dbReference type="OMA" id="VNLRCMQ"/>
<dbReference type="UniPathway" id="UPA00017"/>
<dbReference type="Proteomes" id="UP000000558">
    <property type="component" value="Chromosome"/>
</dbReference>
<dbReference type="Proteomes" id="UP000002519">
    <property type="component" value="Chromosome"/>
</dbReference>
<dbReference type="GO" id="GO:0008909">
    <property type="term" value="F:isochorismate synthase activity"/>
    <property type="evidence" value="ECO:0000250"/>
    <property type="project" value="UniProtKB"/>
</dbReference>
<dbReference type="GO" id="GO:0000287">
    <property type="term" value="F:magnesium ion binding"/>
    <property type="evidence" value="ECO:0000250"/>
    <property type="project" value="UniProtKB"/>
</dbReference>
<dbReference type="GO" id="GO:0009239">
    <property type="term" value="P:enterobactin biosynthetic process"/>
    <property type="evidence" value="ECO:0000250"/>
    <property type="project" value="UniProtKB"/>
</dbReference>
<dbReference type="FunFam" id="3.60.120.10:FF:000001">
    <property type="entry name" value="Isochorismate synthase EntC"/>
    <property type="match status" value="1"/>
</dbReference>
<dbReference type="Gene3D" id="3.60.120.10">
    <property type="entry name" value="Anthranilate synthase"/>
    <property type="match status" value="1"/>
</dbReference>
<dbReference type="InterPro" id="IPR005801">
    <property type="entry name" value="ADC_synthase"/>
</dbReference>
<dbReference type="InterPro" id="IPR015890">
    <property type="entry name" value="Chorismate_C"/>
</dbReference>
<dbReference type="InterPro" id="IPR004561">
    <property type="entry name" value="IsoChor_synthase"/>
</dbReference>
<dbReference type="NCBIfam" id="TIGR00543">
    <property type="entry name" value="isochor_syn"/>
    <property type="match status" value="1"/>
</dbReference>
<dbReference type="NCBIfam" id="NF011591">
    <property type="entry name" value="PRK15016.1"/>
    <property type="match status" value="1"/>
</dbReference>
<dbReference type="PANTHER" id="PTHR42839">
    <property type="entry name" value="ISOCHORISMATE SYNTHASE ENTC"/>
    <property type="match status" value="1"/>
</dbReference>
<dbReference type="PANTHER" id="PTHR42839:SF2">
    <property type="entry name" value="ISOCHORISMATE SYNTHASE ENTC"/>
    <property type="match status" value="1"/>
</dbReference>
<dbReference type="Pfam" id="PF00425">
    <property type="entry name" value="Chorismate_bind"/>
    <property type="match status" value="1"/>
</dbReference>
<dbReference type="SUPFAM" id="SSF56322">
    <property type="entry name" value="ADC synthase"/>
    <property type="match status" value="1"/>
</dbReference>
<reference key="1">
    <citation type="journal article" date="2001" name="Nature">
        <title>Genome sequence of enterohaemorrhagic Escherichia coli O157:H7.</title>
        <authorList>
            <person name="Perna N.T."/>
            <person name="Plunkett G. III"/>
            <person name="Burland V."/>
            <person name="Mau B."/>
            <person name="Glasner J.D."/>
            <person name="Rose D.J."/>
            <person name="Mayhew G.F."/>
            <person name="Evans P.S."/>
            <person name="Gregor J."/>
            <person name="Kirkpatrick H.A."/>
            <person name="Posfai G."/>
            <person name="Hackett J."/>
            <person name="Klink S."/>
            <person name="Boutin A."/>
            <person name="Shao Y."/>
            <person name="Miller L."/>
            <person name="Grotbeck E.J."/>
            <person name="Davis N.W."/>
            <person name="Lim A."/>
            <person name="Dimalanta E.T."/>
            <person name="Potamousis K."/>
            <person name="Apodaca J."/>
            <person name="Anantharaman T.S."/>
            <person name="Lin J."/>
            <person name="Yen G."/>
            <person name="Schwartz D.C."/>
            <person name="Welch R.A."/>
            <person name="Blattner F.R."/>
        </authorList>
    </citation>
    <scope>NUCLEOTIDE SEQUENCE [LARGE SCALE GENOMIC DNA]</scope>
    <source>
        <strain>O157:H7 / EDL933 / ATCC 700927 / EHEC</strain>
    </source>
</reference>
<reference key="2">
    <citation type="journal article" date="2001" name="DNA Res.">
        <title>Complete genome sequence of enterohemorrhagic Escherichia coli O157:H7 and genomic comparison with a laboratory strain K-12.</title>
        <authorList>
            <person name="Hayashi T."/>
            <person name="Makino K."/>
            <person name="Ohnishi M."/>
            <person name="Kurokawa K."/>
            <person name="Ishii K."/>
            <person name="Yokoyama K."/>
            <person name="Han C.-G."/>
            <person name="Ohtsubo E."/>
            <person name="Nakayama K."/>
            <person name="Murata T."/>
            <person name="Tanaka M."/>
            <person name="Tobe T."/>
            <person name="Iida T."/>
            <person name="Takami H."/>
            <person name="Honda T."/>
            <person name="Sasakawa C."/>
            <person name="Ogasawara N."/>
            <person name="Yasunaga T."/>
            <person name="Kuhara S."/>
            <person name="Shiba T."/>
            <person name="Hattori M."/>
            <person name="Shinagawa H."/>
        </authorList>
    </citation>
    <scope>NUCLEOTIDE SEQUENCE [LARGE SCALE GENOMIC DNA]</scope>
    <source>
        <strain>O157:H7 / Sakai / RIMD 0509952 / EHEC</strain>
    </source>
</reference>
<evidence type="ECO:0000250" key="1">
    <source>
        <dbReference type="UniProtKB" id="P0AEJ2"/>
    </source>
</evidence>
<evidence type="ECO:0000305" key="2"/>
<accession>P0AEJ3</accession>
<accession>P10377</accession>
<accession>P77099</accession>
<feature type="chain" id="PRO_0000154145" description="Isochorismate synthase EntC">
    <location>
        <begin position="1"/>
        <end position="391"/>
    </location>
</feature>
<feature type="active site" description="Proton acceptor" evidence="1">
    <location>
        <position position="147"/>
    </location>
</feature>
<feature type="active site" description="Proton donor" evidence="1">
    <location>
        <position position="197"/>
    </location>
</feature>
<feature type="binding site" evidence="1">
    <location>
        <position position="140"/>
    </location>
    <ligand>
        <name>Mg(2+)</name>
        <dbReference type="ChEBI" id="CHEBI:18420"/>
        <label>1</label>
    </ligand>
</feature>
<feature type="binding site" evidence="1">
    <location>
        <position position="142"/>
    </location>
    <ligand>
        <name>Mg(2+)</name>
        <dbReference type="ChEBI" id="CHEBI:18420"/>
        <label>1</label>
    </ligand>
</feature>
<feature type="binding site" evidence="1">
    <location>
        <position position="145"/>
    </location>
    <ligand>
        <name>Mg(2+)</name>
        <dbReference type="ChEBI" id="CHEBI:18420"/>
        <label>1</label>
    </ligand>
</feature>
<feature type="binding site" evidence="1">
    <location>
        <position position="146"/>
    </location>
    <ligand>
        <name>Mg(2+)</name>
        <dbReference type="ChEBI" id="CHEBI:18420"/>
        <label>1</label>
    </ligand>
</feature>
<feature type="binding site" evidence="1">
    <location>
        <position position="214"/>
    </location>
    <ligand>
        <name>isochorismate</name>
        <dbReference type="ChEBI" id="CHEBI:29780"/>
    </ligand>
</feature>
<feature type="binding site" evidence="1">
    <location>
        <position position="215"/>
    </location>
    <ligand>
        <name>isochorismate</name>
        <dbReference type="ChEBI" id="CHEBI:29780"/>
    </ligand>
</feature>
<feature type="binding site" evidence="1">
    <location>
        <position position="241"/>
    </location>
    <ligand>
        <name>isochorismate</name>
        <dbReference type="ChEBI" id="CHEBI:29780"/>
    </ligand>
</feature>
<feature type="binding site" evidence="1">
    <location>
        <position position="241"/>
    </location>
    <ligand>
        <name>Mg(2+)</name>
        <dbReference type="ChEBI" id="CHEBI:18420"/>
        <label>2</label>
    </ligand>
</feature>
<feature type="binding site" evidence="1">
    <location>
        <position position="303"/>
    </location>
    <ligand>
        <name>isochorismate</name>
        <dbReference type="ChEBI" id="CHEBI:29780"/>
    </ligand>
</feature>
<feature type="binding site" evidence="1">
    <location>
        <position position="347"/>
    </location>
    <ligand>
        <name>isochorismate</name>
        <dbReference type="ChEBI" id="CHEBI:29780"/>
    </ligand>
</feature>
<feature type="binding site" evidence="1">
    <location>
        <position position="361"/>
    </location>
    <ligand>
        <name>isochorismate</name>
        <dbReference type="ChEBI" id="CHEBI:29780"/>
    </ligand>
</feature>
<feature type="binding site" evidence="1">
    <location>
        <position position="376"/>
    </location>
    <ligand>
        <name>Mg(2+)</name>
        <dbReference type="ChEBI" id="CHEBI:18420"/>
        <label>2</label>
    </ligand>
</feature>
<feature type="binding site" evidence="1">
    <location>
        <position position="380"/>
    </location>
    <ligand>
        <name>isochorismate</name>
        <dbReference type="ChEBI" id="CHEBI:29780"/>
    </ligand>
</feature>
<comment type="function">
    <text evidence="1">Involved in the biosynthesis of the siderophore enterobactin (macrocyclic trimeric lactone of N-(2,3-dihydroxybenzoyl)-serine). Catalyzes the reversible conversion of chorismate to isochorismate.</text>
</comment>
<comment type="catalytic activity">
    <reaction evidence="1">
        <text>chorismate = isochorismate</text>
        <dbReference type="Rhea" id="RHEA:18985"/>
        <dbReference type="ChEBI" id="CHEBI:29748"/>
        <dbReference type="ChEBI" id="CHEBI:29780"/>
        <dbReference type="EC" id="5.4.4.2"/>
    </reaction>
</comment>
<comment type="cofactor">
    <cofactor evidence="1">
        <name>Mg(2+)</name>
        <dbReference type="ChEBI" id="CHEBI:18420"/>
    </cofactor>
    <text evidence="1">Binds 2 Mg(2+) ions per subunit.</text>
</comment>
<comment type="pathway">
    <text evidence="1">Siderophore biosynthesis; enterobactin biosynthesis.</text>
</comment>
<comment type="subunit">
    <text evidence="1">Monomer. Forms a specific pairwise interaction with EntB; this interaction likely facilitates substrate channeling to connect the EntB and EntC active sites.</text>
</comment>
<comment type="similarity">
    <text evidence="2">Belongs to the isochorismate synthase family.</text>
</comment>
<proteinExistence type="inferred from homology"/>
<organism>
    <name type="scientific">Escherichia coli O157:H7</name>
    <dbReference type="NCBI Taxonomy" id="83334"/>
    <lineage>
        <taxon>Bacteria</taxon>
        <taxon>Pseudomonadati</taxon>
        <taxon>Pseudomonadota</taxon>
        <taxon>Gammaproteobacteria</taxon>
        <taxon>Enterobacterales</taxon>
        <taxon>Enterobacteriaceae</taxon>
        <taxon>Escherichia</taxon>
    </lineage>
</organism>
<sequence>MDTSLAEEVQQTMATLAPNRFFFMSPYRSFTTSGCFARFDEPAVNGDSPDSPFQQKLAALFADAKAQGIKNPVMVGAIPFDPRQPSSLYIPESWQSFSRQEKQASARRFTRSQSLNVVERQAIPEQTTFEQMVARAAALTATPQVDKVVLSRLIDITTDAAIDSGVLLERLIAQNPVSYNFHVPLADGGVLLGASPELLLRKDGERFSSIPLAGSARRQPDEVLDREAGNRLLASEKDRHEHELVTQAMKEVLRERSSELHVPSSPQLITTPTLWHLATPFEGKANSQENALTLACLLHPTPALSGFPHQAATQVIAELEPFDRELFGGIVGWCDSEGNGEWVVTIRCAKLRENQVRLFAGAGIVPASSPLGEWRETGVKLSTMLNVFGLH</sequence>
<protein>
    <recommendedName>
        <fullName evidence="1">Isochorismate synthase EntC</fullName>
        <ecNumber evidence="1">5.4.4.2</ecNumber>
    </recommendedName>
    <alternativeName>
        <fullName evidence="1">Isochorismate mutase</fullName>
    </alternativeName>
</protein>
<keyword id="KW-0259">Enterobactin biosynthesis</keyword>
<keyword id="KW-0413">Isomerase</keyword>
<keyword id="KW-0460">Magnesium</keyword>
<keyword id="KW-0479">Metal-binding</keyword>
<keyword id="KW-1185">Reference proteome</keyword>
<name>ENTC_ECO57</name>
<gene>
    <name evidence="1" type="primary">entC</name>
    <name type="ordered locus">Z0735</name>
    <name type="ordered locus">ECs0632</name>
</gene>